<protein>
    <recommendedName>
        <fullName evidence="1">tRNA-cytidine(32) 2-sulfurtransferase</fullName>
        <ecNumber evidence="1">2.8.1.-</ecNumber>
    </recommendedName>
    <alternativeName>
        <fullName evidence="1">Two-thiocytidine biosynthesis protein A</fullName>
    </alternativeName>
    <alternativeName>
        <fullName evidence="1">tRNA 2-thiocytidine biosynthesis protein TtcA</fullName>
    </alternativeName>
</protein>
<proteinExistence type="inferred from homology"/>
<reference key="1">
    <citation type="journal article" date="2015" name="Genome Announc.">
        <title>Complete genome sequence of Anaeromyxobacter sp. Fw109-5, an anaerobic, metal-reducing bacterium isolated from a contaminated subsurface environment.</title>
        <authorList>
            <person name="Hwang C."/>
            <person name="Copeland A."/>
            <person name="Lucas S."/>
            <person name="Lapidus A."/>
            <person name="Barry K."/>
            <person name="Glavina Del Rio T."/>
            <person name="Dalin E."/>
            <person name="Tice H."/>
            <person name="Pitluck S."/>
            <person name="Sims D."/>
            <person name="Brettin T."/>
            <person name="Bruce D.C."/>
            <person name="Detter J.C."/>
            <person name="Han C.S."/>
            <person name="Schmutz J."/>
            <person name="Larimer F.W."/>
            <person name="Land M.L."/>
            <person name="Hauser L.J."/>
            <person name="Kyrpides N."/>
            <person name="Lykidis A."/>
            <person name="Richardson P."/>
            <person name="Belieav A."/>
            <person name="Sanford R.A."/>
            <person name="Loeffler F.E."/>
            <person name="Fields M.W."/>
        </authorList>
    </citation>
    <scope>NUCLEOTIDE SEQUENCE [LARGE SCALE GENOMIC DNA]</scope>
    <source>
        <strain>Fw109-5</strain>
    </source>
</reference>
<evidence type="ECO:0000255" key="1">
    <source>
        <dbReference type="HAMAP-Rule" id="MF_01850"/>
    </source>
</evidence>
<sequence>MRAPRRRCYRVRPMHDVSKLEKRLLRAAANAIRDFELIGDGDRIMVAVSGGKDSYTLLHVLMRLRERAPIDFDLVAVNLDQGQPGYPAEIVERHFQAVGVPHRMLYADTYSIVRRLVPEGKTTCPVCSRLRRGVLYNAAAEMGCTKIALGHHRDDLVETLLLSALYSGALKSMPPKLRSDDGRNVVVRPLCYAAEEDIAAFATAMRFPIVPCDLCGSQPNLRRKRVKALLAELSDEHPAVKGNLLNALGHVVPSHLLDRDLHRLVASTGRDPWLDGDEDEDGGCLQGEVADALVKLAGAREDA</sequence>
<name>TTCA_ANADF</name>
<comment type="function">
    <text evidence="1">Catalyzes the ATP-dependent 2-thiolation of cytidine in position 32 of tRNA, to form 2-thiocytidine (s(2)C32). The sulfur atoms are provided by the cysteine/cysteine desulfurase (IscS) system.</text>
</comment>
<comment type="catalytic activity">
    <reaction evidence="1">
        <text>cytidine(32) in tRNA + S-sulfanyl-L-cysteinyl-[cysteine desulfurase] + AH2 + ATP = 2-thiocytidine(32) in tRNA + L-cysteinyl-[cysteine desulfurase] + A + AMP + diphosphate + H(+)</text>
        <dbReference type="Rhea" id="RHEA:57048"/>
        <dbReference type="Rhea" id="RHEA-COMP:10288"/>
        <dbReference type="Rhea" id="RHEA-COMP:12157"/>
        <dbReference type="Rhea" id="RHEA-COMP:12158"/>
        <dbReference type="Rhea" id="RHEA-COMP:14821"/>
        <dbReference type="ChEBI" id="CHEBI:13193"/>
        <dbReference type="ChEBI" id="CHEBI:15378"/>
        <dbReference type="ChEBI" id="CHEBI:17499"/>
        <dbReference type="ChEBI" id="CHEBI:29950"/>
        <dbReference type="ChEBI" id="CHEBI:30616"/>
        <dbReference type="ChEBI" id="CHEBI:33019"/>
        <dbReference type="ChEBI" id="CHEBI:61963"/>
        <dbReference type="ChEBI" id="CHEBI:82748"/>
        <dbReference type="ChEBI" id="CHEBI:141453"/>
        <dbReference type="ChEBI" id="CHEBI:456215"/>
    </reaction>
    <physiologicalReaction direction="left-to-right" evidence="1">
        <dbReference type="Rhea" id="RHEA:57049"/>
    </physiologicalReaction>
</comment>
<comment type="cofactor">
    <cofactor evidence="1">
        <name>Mg(2+)</name>
        <dbReference type="ChEBI" id="CHEBI:18420"/>
    </cofactor>
</comment>
<comment type="cofactor">
    <cofactor evidence="1">
        <name>[4Fe-4S] cluster</name>
        <dbReference type="ChEBI" id="CHEBI:49883"/>
    </cofactor>
    <text evidence="1">Binds 1 [4Fe-4S] cluster per subunit. The cluster is chelated by three Cys residues, the fourth Fe has a free coordination site that may bind a sulfur atom transferred from the persulfide of IscS.</text>
</comment>
<comment type="pathway">
    <text evidence="1">tRNA modification.</text>
</comment>
<comment type="subunit">
    <text evidence="1">Homodimer.</text>
</comment>
<comment type="subcellular location">
    <subcellularLocation>
        <location evidence="1">Cytoplasm</location>
    </subcellularLocation>
</comment>
<comment type="miscellaneous">
    <text evidence="1">The thiolation reaction likely consists of two steps: a first activation step by ATP to form an adenylated intermediate of the target base of tRNA, and a second nucleophilic substitution step of the sulfur (S) atom supplied by the hydrosulfide attached to the Fe-S cluster.</text>
</comment>
<comment type="similarity">
    <text evidence="1">Belongs to the TtcA family.</text>
</comment>
<keyword id="KW-0004">4Fe-4S</keyword>
<keyword id="KW-0067">ATP-binding</keyword>
<keyword id="KW-0963">Cytoplasm</keyword>
<keyword id="KW-0408">Iron</keyword>
<keyword id="KW-0411">Iron-sulfur</keyword>
<keyword id="KW-0460">Magnesium</keyword>
<keyword id="KW-0479">Metal-binding</keyword>
<keyword id="KW-0547">Nucleotide-binding</keyword>
<keyword id="KW-1185">Reference proteome</keyword>
<keyword id="KW-0694">RNA-binding</keyword>
<keyword id="KW-0808">Transferase</keyword>
<keyword id="KW-0819">tRNA processing</keyword>
<keyword id="KW-0820">tRNA-binding</keyword>
<gene>
    <name evidence="1" type="primary">ttcA</name>
    <name type="ordered locus">Anae109_0949</name>
</gene>
<accession>A7H8W2</accession>
<organism>
    <name type="scientific">Anaeromyxobacter sp. (strain Fw109-5)</name>
    <dbReference type="NCBI Taxonomy" id="404589"/>
    <lineage>
        <taxon>Bacteria</taxon>
        <taxon>Pseudomonadati</taxon>
        <taxon>Myxococcota</taxon>
        <taxon>Myxococcia</taxon>
        <taxon>Myxococcales</taxon>
        <taxon>Cystobacterineae</taxon>
        <taxon>Anaeromyxobacteraceae</taxon>
        <taxon>Anaeromyxobacter</taxon>
    </lineage>
</organism>
<feature type="chain" id="PRO_0000348660" description="tRNA-cytidine(32) 2-sulfurtransferase">
    <location>
        <begin position="1"/>
        <end position="303"/>
    </location>
</feature>
<feature type="short sequence motif" description="PP-loop motif" evidence="1">
    <location>
        <begin position="49"/>
        <end position="54"/>
    </location>
</feature>
<feature type="binding site" evidence="1">
    <location>
        <position position="124"/>
    </location>
    <ligand>
        <name>[4Fe-4S] cluster</name>
        <dbReference type="ChEBI" id="CHEBI:49883"/>
    </ligand>
</feature>
<feature type="binding site" evidence="1">
    <location>
        <position position="127"/>
    </location>
    <ligand>
        <name>[4Fe-4S] cluster</name>
        <dbReference type="ChEBI" id="CHEBI:49883"/>
    </ligand>
</feature>
<feature type="binding site" evidence="1">
    <location>
        <position position="215"/>
    </location>
    <ligand>
        <name>[4Fe-4S] cluster</name>
        <dbReference type="ChEBI" id="CHEBI:49883"/>
    </ligand>
</feature>
<dbReference type="EC" id="2.8.1.-" evidence="1"/>
<dbReference type="EMBL" id="CP000769">
    <property type="protein sequence ID" value="ABS25158.1"/>
    <property type="molecule type" value="Genomic_DNA"/>
</dbReference>
<dbReference type="SMR" id="A7H8W2"/>
<dbReference type="STRING" id="404589.Anae109_0949"/>
<dbReference type="KEGG" id="afw:Anae109_0949"/>
<dbReference type="eggNOG" id="COG0037">
    <property type="taxonomic scope" value="Bacteria"/>
</dbReference>
<dbReference type="HOGENOM" id="CLU_026481_0_0_7"/>
<dbReference type="Proteomes" id="UP000006382">
    <property type="component" value="Chromosome"/>
</dbReference>
<dbReference type="GO" id="GO:0005737">
    <property type="term" value="C:cytoplasm"/>
    <property type="evidence" value="ECO:0007669"/>
    <property type="project" value="UniProtKB-SubCell"/>
</dbReference>
<dbReference type="GO" id="GO:0051539">
    <property type="term" value="F:4 iron, 4 sulfur cluster binding"/>
    <property type="evidence" value="ECO:0007669"/>
    <property type="project" value="UniProtKB-KW"/>
</dbReference>
<dbReference type="GO" id="GO:0005524">
    <property type="term" value="F:ATP binding"/>
    <property type="evidence" value="ECO:0007669"/>
    <property type="project" value="UniProtKB-KW"/>
</dbReference>
<dbReference type="GO" id="GO:0046872">
    <property type="term" value="F:metal ion binding"/>
    <property type="evidence" value="ECO:0007669"/>
    <property type="project" value="UniProtKB-KW"/>
</dbReference>
<dbReference type="GO" id="GO:0016740">
    <property type="term" value="F:transferase activity"/>
    <property type="evidence" value="ECO:0007669"/>
    <property type="project" value="UniProtKB-KW"/>
</dbReference>
<dbReference type="GO" id="GO:0000049">
    <property type="term" value="F:tRNA binding"/>
    <property type="evidence" value="ECO:0007669"/>
    <property type="project" value="UniProtKB-KW"/>
</dbReference>
<dbReference type="GO" id="GO:0006400">
    <property type="term" value="P:tRNA modification"/>
    <property type="evidence" value="ECO:0007669"/>
    <property type="project" value="UniProtKB-ARBA"/>
</dbReference>
<dbReference type="CDD" id="cd24138">
    <property type="entry name" value="TtcA-like"/>
    <property type="match status" value="1"/>
</dbReference>
<dbReference type="Gene3D" id="3.40.50.620">
    <property type="entry name" value="HUPs"/>
    <property type="match status" value="1"/>
</dbReference>
<dbReference type="HAMAP" id="MF_01850">
    <property type="entry name" value="TtcA"/>
    <property type="match status" value="1"/>
</dbReference>
<dbReference type="InterPro" id="IPR014729">
    <property type="entry name" value="Rossmann-like_a/b/a_fold"/>
</dbReference>
<dbReference type="InterPro" id="IPR011063">
    <property type="entry name" value="TilS/TtcA_N"/>
</dbReference>
<dbReference type="InterPro" id="IPR012089">
    <property type="entry name" value="tRNA_Cyd_32_2_STrfase"/>
</dbReference>
<dbReference type="InterPro" id="IPR035107">
    <property type="entry name" value="tRNA_thiolation_TtcA_Ctu1"/>
</dbReference>
<dbReference type="NCBIfam" id="NF007972">
    <property type="entry name" value="PRK10696.1"/>
    <property type="match status" value="1"/>
</dbReference>
<dbReference type="PANTHER" id="PTHR43686:SF1">
    <property type="entry name" value="AMINOTRAN_5 DOMAIN-CONTAINING PROTEIN"/>
    <property type="match status" value="1"/>
</dbReference>
<dbReference type="PANTHER" id="PTHR43686">
    <property type="entry name" value="SULFURTRANSFERASE-RELATED"/>
    <property type="match status" value="1"/>
</dbReference>
<dbReference type="Pfam" id="PF01171">
    <property type="entry name" value="ATP_bind_3"/>
    <property type="match status" value="1"/>
</dbReference>
<dbReference type="PIRSF" id="PIRSF004976">
    <property type="entry name" value="ATPase_YdaO"/>
    <property type="match status" value="1"/>
</dbReference>
<dbReference type="SUPFAM" id="SSF52402">
    <property type="entry name" value="Adenine nucleotide alpha hydrolases-like"/>
    <property type="match status" value="1"/>
</dbReference>